<proteinExistence type="evidence at protein level"/>
<dbReference type="EC" id="1.1.1.169" evidence="2"/>
<dbReference type="EMBL" id="AP006878">
    <property type="protein sequence ID" value="BAD86157.1"/>
    <property type="molecule type" value="Genomic_DNA"/>
</dbReference>
<dbReference type="RefSeq" id="WP_011250918.1">
    <property type="nucleotide sequence ID" value="NC_006624.1"/>
</dbReference>
<dbReference type="PDB" id="5AYV">
    <property type="method" value="X-ray"/>
    <property type="resolution" value="1.65 A"/>
    <property type="chains" value="A/B=1-309"/>
</dbReference>
<dbReference type="PDB" id="5HWS">
    <property type="method" value="X-ray"/>
    <property type="resolution" value="2.30 A"/>
    <property type="chains" value="A/B/C/D=1-309"/>
</dbReference>
<dbReference type="PDBsum" id="5AYV"/>
<dbReference type="PDBsum" id="5HWS"/>
<dbReference type="SMR" id="Q5JGC2"/>
<dbReference type="STRING" id="69014.TK1968"/>
<dbReference type="EnsemblBacteria" id="BAD86157">
    <property type="protein sequence ID" value="BAD86157"/>
    <property type="gene ID" value="TK1968"/>
</dbReference>
<dbReference type="GeneID" id="78448502"/>
<dbReference type="KEGG" id="tko:TK1968"/>
<dbReference type="PATRIC" id="fig|69014.16.peg.1922"/>
<dbReference type="eggNOG" id="arCOG04139">
    <property type="taxonomic scope" value="Archaea"/>
</dbReference>
<dbReference type="HOGENOM" id="CLU_031468_0_1_2"/>
<dbReference type="InParanoid" id="Q5JGC2"/>
<dbReference type="OrthoDB" id="201845at2157"/>
<dbReference type="PhylomeDB" id="Q5JGC2"/>
<dbReference type="BioCyc" id="MetaCyc:MONOMER-21895"/>
<dbReference type="BRENDA" id="1.1.1.169">
    <property type="organism ID" value="5246"/>
</dbReference>
<dbReference type="UniPathway" id="UPA00241"/>
<dbReference type="EvolutionaryTrace" id="Q5JGC2"/>
<dbReference type="Proteomes" id="UP000000536">
    <property type="component" value="Chromosome"/>
</dbReference>
<dbReference type="GO" id="GO:0005737">
    <property type="term" value="C:cytoplasm"/>
    <property type="evidence" value="ECO:0000318"/>
    <property type="project" value="GO_Central"/>
</dbReference>
<dbReference type="GO" id="GO:0008677">
    <property type="term" value="F:2-dehydropantoate 2-reductase activity"/>
    <property type="evidence" value="ECO:0000314"/>
    <property type="project" value="CACAO"/>
</dbReference>
<dbReference type="GO" id="GO:0000166">
    <property type="term" value="F:nucleotide binding"/>
    <property type="evidence" value="ECO:0007669"/>
    <property type="project" value="UniProtKB-KW"/>
</dbReference>
<dbReference type="GO" id="GO:0015937">
    <property type="term" value="P:coenzyme A biosynthetic process"/>
    <property type="evidence" value="ECO:0007669"/>
    <property type="project" value="UniProtKB-UniPathway"/>
</dbReference>
<dbReference type="GO" id="GO:0015940">
    <property type="term" value="P:pantothenate biosynthetic process"/>
    <property type="evidence" value="ECO:0007669"/>
    <property type="project" value="InterPro"/>
</dbReference>
<dbReference type="FunFam" id="1.10.1040.10:FF:000107">
    <property type="entry name" value="2-dehydropantoate 2-reductase"/>
    <property type="match status" value="1"/>
</dbReference>
<dbReference type="Gene3D" id="1.10.1040.10">
    <property type="entry name" value="N-(1-d-carboxylethyl)-l-norvaline Dehydrogenase, domain 2"/>
    <property type="match status" value="1"/>
</dbReference>
<dbReference type="Gene3D" id="3.40.50.720">
    <property type="entry name" value="NAD(P)-binding Rossmann-like Domain"/>
    <property type="match status" value="1"/>
</dbReference>
<dbReference type="InterPro" id="IPR008927">
    <property type="entry name" value="6-PGluconate_DH-like_C_sf"/>
</dbReference>
<dbReference type="InterPro" id="IPR013328">
    <property type="entry name" value="6PGD_dom2"/>
</dbReference>
<dbReference type="InterPro" id="IPR003710">
    <property type="entry name" value="ApbA"/>
</dbReference>
<dbReference type="InterPro" id="IPR050838">
    <property type="entry name" value="Ketopantoate_reductase"/>
</dbReference>
<dbReference type="InterPro" id="IPR013752">
    <property type="entry name" value="KPA_reductase"/>
</dbReference>
<dbReference type="InterPro" id="IPR013332">
    <property type="entry name" value="KPR_N"/>
</dbReference>
<dbReference type="InterPro" id="IPR036291">
    <property type="entry name" value="NAD(P)-bd_dom_sf"/>
</dbReference>
<dbReference type="NCBIfam" id="TIGR00745">
    <property type="entry name" value="apbA_panE"/>
    <property type="match status" value="1"/>
</dbReference>
<dbReference type="NCBIfam" id="NF005092">
    <property type="entry name" value="PRK06522.2-3"/>
    <property type="match status" value="1"/>
</dbReference>
<dbReference type="PANTHER" id="PTHR43765:SF2">
    <property type="entry name" value="2-DEHYDROPANTOATE 2-REDUCTASE"/>
    <property type="match status" value="1"/>
</dbReference>
<dbReference type="PANTHER" id="PTHR43765">
    <property type="entry name" value="2-DEHYDROPANTOATE 2-REDUCTASE-RELATED"/>
    <property type="match status" value="1"/>
</dbReference>
<dbReference type="Pfam" id="PF02558">
    <property type="entry name" value="ApbA"/>
    <property type="match status" value="1"/>
</dbReference>
<dbReference type="Pfam" id="PF08546">
    <property type="entry name" value="ApbA_C"/>
    <property type="match status" value="1"/>
</dbReference>
<dbReference type="SUPFAM" id="SSF48179">
    <property type="entry name" value="6-phosphogluconate dehydrogenase C-terminal domain-like"/>
    <property type="match status" value="1"/>
</dbReference>
<dbReference type="SUPFAM" id="SSF51735">
    <property type="entry name" value="NAD(P)-binding Rossmann-fold domains"/>
    <property type="match status" value="1"/>
</dbReference>
<evidence type="ECO:0000250" key="1">
    <source>
        <dbReference type="UniProtKB" id="P0A9J4"/>
    </source>
</evidence>
<evidence type="ECO:0000269" key="2">
    <source>
    </source>
</evidence>
<evidence type="ECO:0000269" key="3">
    <source>
    </source>
</evidence>
<evidence type="ECO:0000269" key="4">
    <source>
    </source>
</evidence>
<evidence type="ECO:0000303" key="5">
    <source>
    </source>
</evidence>
<evidence type="ECO:0000305" key="6"/>
<evidence type="ECO:0000305" key="7">
    <source>
    </source>
</evidence>
<evidence type="ECO:0000312" key="8">
    <source>
        <dbReference type="EMBL" id="BAD86157.1"/>
    </source>
</evidence>
<evidence type="ECO:0007744" key="9">
    <source>
        <dbReference type="PDB" id="5AYV"/>
    </source>
</evidence>
<evidence type="ECO:0007744" key="10">
    <source>
        <dbReference type="PDB" id="5HWS"/>
    </source>
</evidence>
<evidence type="ECO:0007829" key="11">
    <source>
        <dbReference type="PDB" id="5AYV"/>
    </source>
</evidence>
<evidence type="ECO:0007829" key="12">
    <source>
        <dbReference type="PDB" id="5HWS"/>
    </source>
</evidence>
<sequence length="309" mass="34050">MRIYVLGAGSIGSLFGALLARAGNDVTLIGRREQVDAINKNGLHVFGAEEFTVKPKATIYAPEEPPDLLILAVKSYSTKTALECARQCIGRNTWVLSIQNGLGNEELALKYTPNVMGGVTTNGAMLVEWGKVLWAGKGITVIGRYPTGRDDFVDEVASVFNEAGIDTSVTENAIGWKWAKAIVNSVINGLGTVLEVKNGHLKDDPHLEGISVDIAREGCMVAQQLGIEFEIHPLELLWDTIERTRENYNSTLQDIWRGRETEVDYIHGKIVEYARSVGMEAPRNELLWVLVKAKERINRGKTRNISEGC</sequence>
<name>PANE_THEKO</name>
<reference key="1">
    <citation type="journal article" date="2005" name="Genome Res.">
        <title>Complete genome sequence of the hyperthermophilic archaeon Thermococcus kodakaraensis KOD1 and comparison with Pyrococcus genomes.</title>
        <authorList>
            <person name="Fukui T."/>
            <person name="Atomi H."/>
            <person name="Kanai T."/>
            <person name="Matsumi R."/>
            <person name="Fujiwara S."/>
            <person name="Imanaka T."/>
        </authorList>
    </citation>
    <scope>NUCLEOTIDE SEQUENCE [LARGE SCALE GENOMIC DNA]</scope>
    <source>
        <strain>ATCC BAA-918 / JCM 12380 / KOD1</strain>
    </source>
</reference>
<reference key="2">
    <citation type="journal article" date="2013" name="Mol. Microbiol.">
        <title>Identification and characterization of an archaeal ketopantoate reductase and its involvement in regulation of coenzyme A biosynthesis.</title>
        <authorList>
            <person name="Tomita H."/>
            <person name="Imanaka T."/>
            <person name="Atomi H."/>
        </authorList>
    </citation>
    <scope>FUNCTION</scope>
    <scope>CATALYTIC ACTIVITY</scope>
    <scope>ACTIVITY REGULATION</scope>
    <scope>BIOPHYSICOCHEMICAL PROPERTIES</scope>
    <scope>PATHWAY</scope>
    <scope>SUBUNIT</scope>
    <scope>SUBCELLULAR LOCATION</scope>
    <scope>DISRUPTION PHENOTYPE</scope>
    <source>
        <strain>ATCC BAA-918 / JCM 12380 / KOD1</strain>
    </source>
</reference>
<reference evidence="10" key="3">
    <citation type="journal article" date="2016" name="Acta Crystallogr. F">
        <title>Crystal structure of ketopantoate reductase from Thermococcus kodakarensis complexed with NADP(+).</title>
        <authorList>
            <person name="Aikawa Y."/>
            <person name="Nishitani Y."/>
            <person name="Tomita H."/>
            <person name="Atomi H."/>
            <person name="Miki K."/>
        </authorList>
    </citation>
    <scope>X-RAY CRYSTALLOGRAPHY (2.30 ANGSTROMS) IN COMPLEX WITH NADP</scope>
    <scope>SUBUNIT</scope>
    <scope>MUTAGENESIS OF TYR-60 AND TRP-129</scope>
</reference>
<reference evidence="9" key="4">
    <citation type="journal article" date="2016" name="Proteins">
        <title>Crystal structure of archaeal ketopantoate reductase complexed with coenzyme a and 2-oxopantoate provides structural insights into feedback regulation.</title>
        <authorList>
            <person name="Aikawa Y."/>
            <person name="Nishitani Y."/>
            <person name="Tomita H."/>
            <person name="Atomi H."/>
            <person name="Miki K."/>
        </authorList>
    </citation>
    <scope>X-RAY CRYSTALLOGRAPHY (1.65 ANGSTROMS) IN COMPLEX WITH 2-DEHYDROPANTOATE; COENZYME A AND NADP</scope>
    <scope>ACTIVITY REGULATION</scope>
    <scope>SUBUNIT</scope>
    <scope>DOMAIN</scope>
    <scope>MUTAGENESIS OF CYS-84</scope>
</reference>
<keyword id="KW-0002">3D-structure</keyword>
<keyword id="KW-0173">Coenzyme A biosynthesis</keyword>
<keyword id="KW-0963">Cytoplasm</keyword>
<keyword id="KW-0520">NAD</keyword>
<keyword id="KW-0521">NADP</keyword>
<keyword id="KW-0547">Nucleotide-binding</keyword>
<keyword id="KW-0560">Oxidoreductase</keyword>
<keyword id="KW-1185">Reference proteome</keyword>
<feature type="chain" id="PRO_0000448239" description="2-dehydropantoate 2-reductase">
    <location>
        <begin position="1"/>
        <end position="309"/>
    </location>
</feature>
<feature type="active site" description="Proton donor" evidence="1">
    <location>
        <position position="180"/>
    </location>
</feature>
<feature type="binding site" evidence="3 4">
    <location>
        <begin position="7"/>
        <end position="12"/>
    </location>
    <ligand>
        <name>NADP(+)</name>
        <dbReference type="ChEBI" id="CHEBI:58349"/>
    </ligand>
</feature>
<feature type="binding site" evidence="3">
    <location>
        <begin position="8"/>
        <end position="10"/>
    </location>
    <ligand>
        <name>CoA</name>
        <dbReference type="ChEBI" id="CHEBI:57287"/>
        <note>inhibitor</note>
    </ligand>
</feature>
<feature type="binding site" evidence="3">
    <location>
        <position position="31"/>
    </location>
    <ligand>
        <name>CoA</name>
        <dbReference type="ChEBI" id="CHEBI:57287"/>
        <note>inhibitor</note>
    </ligand>
</feature>
<feature type="binding site" evidence="3">
    <location>
        <position position="31"/>
    </location>
    <ligand>
        <name>NADP(+)</name>
        <dbReference type="ChEBI" id="CHEBI:58349"/>
    </ligand>
</feature>
<feature type="binding site" evidence="3">
    <location>
        <position position="74"/>
    </location>
    <ligand>
        <name>CoA</name>
        <dbReference type="ChEBI" id="CHEBI:57287"/>
        <note>inhibitor</note>
    </ligand>
</feature>
<feature type="binding site" evidence="4">
    <location>
        <position position="74"/>
    </location>
    <ligand>
        <name>NADP(+)</name>
        <dbReference type="ChEBI" id="CHEBI:58349"/>
    </ligand>
</feature>
<feature type="binding site" evidence="3">
    <location>
        <position position="84"/>
    </location>
    <ligand>
        <name>CoA</name>
        <dbReference type="ChEBI" id="CHEBI:57287"/>
        <note>inhibitor</note>
    </ligand>
</feature>
<feature type="binding site" evidence="3 4">
    <location>
        <position position="100"/>
    </location>
    <ligand>
        <name>NADP(+)</name>
        <dbReference type="ChEBI" id="CHEBI:58349"/>
    </ligand>
</feature>
<feature type="binding site" evidence="3 4">
    <location>
        <position position="124"/>
    </location>
    <ligand>
        <name>NADP(+)</name>
        <dbReference type="ChEBI" id="CHEBI:58349"/>
    </ligand>
</feature>
<feature type="binding site" evidence="3">
    <location>
        <position position="180"/>
    </location>
    <ligand>
        <name>substrate</name>
    </ligand>
</feature>
<feature type="binding site" evidence="3">
    <location>
        <position position="184"/>
    </location>
    <ligand>
        <name>substrate</name>
    </ligand>
</feature>
<feature type="binding site" evidence="3">
    <location>
        <position position="188"/>
    </location>
    <ligand>
        <name>substrate</name>
    </ligand>
</feature>
<feature type="binding site" evidence="3">
    <location>
        <position position="198"/>
    </location>
    <ligand>
        <name>substrate</name>
    </ligand>
</feature>
<feature type="binding site" evidence="3">
    <location>
        <begin position="247"/>
        <end position="250"/>
    </location>
    <ligand>
        <name>substrate</name>
    </ligand>
</feature>
<feature type="binding site" evidence="3">
    <location>
        <position position="257"/>
    </location>
    <ligand>
        <name>CoA</name>
        <dbReference type="ChEBI" id="CHEBI:57287"/>
        <note>inhibitor</note>
    </ligand>
</feature>
<feature type="binding site" evidence="3 4">
    <location>
        <position position="262"/>
    </location>
    <ligand>
        <name>NADP(+)</name>
        <dbReference type="ChEBI" id="CHEBI:58349"/>
    </ligand>
</feature>
<feature type="mutagenesis site" description="Decreases efficiency of the inhibition by CoA." evidence="4">
    <original>Y</original>
    <variation>A</variation>
    <location>
        <position position="60"/>
    </location>
</feature>
<feature type="mutagenesis site" description="Decreases efficiency of the inhibition by CoA. Inhibition shows no time-dependency." evidence="3">
    <original>C</original>
    <variation>A</variation>
    <location>
        <position position="84"/>
    </location>
</feature>
<feature type="mutagenesis site" description="Decreases efficiency of the inhibition by CoA." evidence="4">
    <original>W</original>
    <variation>A</variation>
    <location>
        <position position="129"/>
    </location>
</feature>
<feature type="strand" evidence="11">
    <location>
        <begin position="2"/>
        <end position="6"/>
    </location>
</feature>
<feature type="helix" evidence="11">
    <location>
        <begin position="10"/>
        <end position="21"/>
    </location>
</feature>
<feature type="strand" evidence="11">
    <location>
        <begin position="25"/>
        <end position="29"/>
    </location>
</feature>
<feature type="helix" evidence="11">
    <location>
        <begin position="32"/>
        <end position="41"/>
    </location>
</feature>
<feature type="strand" evidence="11">
    <location>
        <begin position="43"/>
        <end position="49"/>
    </location>
</feature>
<feature type="strand" evidence="11">
    <location>
        <begin position="51"/>
        <end position="53"/>
    </location>
</feature>
<feature type="strand" evidence="11">
    <location>
        <begin position="56"/>
        <end position="60"/>
    </location>
</feature>
<feature type="strand" evidence="11">
    <location>
        <begin position="67"/>
        <end position="71"/>
    </location>
</feature>
<feature type="helix" evidence="11">
    <location>
        <begin position="75"/>
        <end position="77"/>
    </location>
</feature>
<feature type="helix" evidence="11">
    <location>
        <begin position="78"/>
        <end position="85"/>
    </location>
</feature>
<feature type="helix" evidence="11">
    <location>
        <begin position="86"/>
        <end position="88"/>
    </location>
</feature>
<feature type="strand" evidence="11">
    <location>
        <begin position="94"/>
        <end position="97"/>
    </location>
</feature>
<feature type="strand" evidence="11">
    <location>
        <begin position="100"/>
        <end position="103"/>
    </location>
</feature>
<feature type="helix" evidence="11">
    <location>
        <begin position="104"/>
        <end position="108"/>
    </location>
</feature>
<feature type="turn" evidence="11">
    <location>
        <begin position="109"/>
        <end position="111"/>
    </location>
</feature>
<feature type="strand" evidence="11">
    <location>
        <begin position="115"/>
        <end position="120"/>
    </location>
</feature>
<feature type="strand" evidence="11">
    <location>
        <begin position="123"/>
        <end position="128"/>
    </location>
</feature>
<feature type="strand" evidence="11">
    <location>
        <begin position="131"/>
        <end position="136"/>
    </location>
</feature>
<feature type="strand" evidence="11">
    <location>
        <begin position="140"/>
        <end position="148"/>
    </location>
</feature>
<feature type="helix" evidence="11">
    <location>
        <begin position="151"/>
        <end position="162"/>
    </location>
</feature>
<feature type="strand" evidence="11">
    <location>
        <begin position="167"/>
        <end position="169"/>
    </location>
</feature>
<feature type="helix" evidence="11">
    <location>
        <begin position="173"/>
        <end position="194"/>
    </location>
</feature>
<feature type="helix" evidence="11">
    <location>
        <begin position="200"/>
        <end position="203"/>
    </location>
</feature>
<feature type="helix" evidence="11">
    <location>
        <begin position="205"/>
        <end position="224"/>
    </location>
</feature>
<feature type="helix" evidence="11">
    <location>
        <begin position="233"/>
        <end position="243"/>
    </location>
</feature>
<feature type="turn" evidence="12">
    <location>
        <begin position="244"/>
        <end position="246"/>
    </location>
</feature>
<feature type="helix" evidence="11">
    <location>
        <begin position="250"/>
        <end position="257"/>
    </location>
</feature>
<feature type="helix" evidence="11">
    <location>
        <begin position="263"/>
        <end position="265"/>
    </location>
</feature>
<feature type="helix" evidence="11">
    <location>
        <begin position="267"/>
        <end position="276"/>
    </location>
</feature>
<feature type="helix" evidence="11">
    <location>
        <begin position="282"/>
        <end position="299"/>
    </location>
</feature>
<gene>
    <name evidence="8" type="ordered locus">TK1968</name>
</gene>
<accession>Q5JGC2</accession>
<protein>
    <recommendedName>
        <fullName evidence="6">2-dehydropantoate 2-reductase</fullName>
        <ecNumber evidence="2">1.1.1.169</ecNumber>
    </recommendedName>
    <alternativeName>
        <fullName evidence="5">Ketopantoate reductase</fullName>
        <shortName evidence="5">KPR</shortName>
    </alternativeName>
</protein>
<comment type="function">
    <text evidence="2">Catalyzes the NAD(P)H-dependent reduction of ketopantoate into pantoic acid. Prefers NADH rather than NADPH as the electron donor.</text>
</comment>
<comment type="catalytic activity">
    <reaction evidence="2">
        <text>(R)-pantoate + NAD(+) = 2-dehydropantoate + NADH + H(+)</text>
        <dbReference type="Rhea" id="RHEA:61292"/>
        <dbReference type="ChEBI" id="CHEBI:11561"/>
        <dbReference type="ChEBI" id="CHEBI:15378"/>
        <dbReference type="ChEBI" id="CHEBI:15980"/>
        <dbReference type="ChEBI" id="CHEBI:57540"/>
        <dbReference type="ChEBI" id="CHEBI:57945"/>
    </reaction>
    <physiologicalReaction direction="right-to-left" evidence="2">
        <dbReference type="Rhea" id="RHEA:61294"/>
    </physiologicalReaction>
</comment>
<comment type="catalytic activity">
    <reaction evidence="2">
        <text>(R)-pantoate + NADP(+) = 2-dehydropantoate + NADPH + H(+)</text>
        <dbReference type="Rhea" id="RHEA:16233"/>
        <dbReference type="ChEBI" id="CHEBI:11561"/>
        <dbReference type="ChEBI" id="CHEBI:15378"/>
        <dbReference type="ChEBI" id="CHEBI:15980"/>
        <dbReference type="ChEBI" id="CHEBI:57783"/>
        <dbReference type="ChEBI" id="CHEBI:58349"/>
        <dbReference type="EC" id="1.1.1.169"/>
    </reaction>
    <physiologicalReaction direction="right-to-left" evidence="2">
        <dbReference type="Rhea" id="RHEA:16235"/>
    </physiologicalReaction>
</comment>
<comment type="activity regulation">
    <text evidence="2 3">Regulated by feedback inhibition by coenzyme A (CoA). CoA acts by competing with NAD(P)H (PubMed:23941541, PubMed:26757028). A disulfide bond is formed between CoA and Cys-84, which indicates an irreversible inhibition upon binding of CoA (PubMed:26757028).</text>
</comment>
<comment type="biophysicochemical properties">
    <kinetics>
        <KM evidence="2">6.03 uM for ketopantoate</KM>
        <KM evidence="2">3.01 uM for NADH</KM>
        <KM evidence="2">1.35 uM for NADPH</KM>
        <KM evidence="2">130 uM for D-pantoate</KM>
        <KM evidence="2">2040 uM for L-pantoate</KM>
        <KM evidence="2">40.9 uM for NAD(+)</KM>
        <Vmax evidence="2">40.7 umol/min/mg enzyme toward ketopantoate (in the presence of NADH)</Vmax>
        <Vmax evidence="2">34.7 umol/min/mg enzyme toward NADH</Vmax>
        <Vmax evidence="2">3.92 umol/min/mg enzyme toward NADPH</Vmax>
        <text evidence="2">kcat is 23.1 sec(-1) toward ketopantoate (in the presence of NADH). kcat is 19.7 sec(-1) toward NADH. kcat is 2.22 sec(-1) toward NADPH.</text>
    </kinetics>
    <phDependence>
        <text evidence="2">Optimum pH is 6.4.</text>
    </phDependence>
    <temperatureDependence>
        <text evidence="2">Optimum temperature is 90 degrees Celsius. Is extremely thermostable.</text>
    </temperatureDependence>
</comment>
<comment type="pathway">
    <text evidence="7">Cofactor biosynthesis; coenzyme A biosynthesis.</text>
</comment>
<comment type="subunit">
    <text evidence="2 3 4">Homodimer.</text>
</comment>
<comment type="subcellular location">
    <subcellularLocation>
        <location evidence="7">Cytoplasm</location>
    </subcellularLocation>
</comment>
<comment type="domain">
    <text evidence="3">Cooperative binding of CoA and ketopantoate induces a closed inhibited state by interacting with the N-terminal and C-terminal domains, and seems to facilitate the disulfide bond formation.</text>
</comment>
<comment type="disruption phenotype">
    <text evidence="2">Disruption of the gene results in a strain with growth defects that are complemented by addition of pantoate.</text>
</comment>
<comment type="similarity">
    <text evidence="6">Belongs to the ketopantoate reductase family.</text>
</comment>
<organism>
    <name type="scientific">Thermococcus kodakarensis (strain ATCC BAA-918 / JCM 12380 / KOD1)</name>
    <name type="common">Pyrococcus kodakaraensis (strain KOD1)</name>
    <dbReference type="NCBI Taxonomy" id="69014"/>
    <lineage>
        <taxon>Archaea</taxon>
        <taxon>Methanobacteriati</taxon>
        <taxon>Methanobacteriota</taxon>
        <taxon>Thermococci</taxon>
        <taxon>Thermococcales</taxon>
        <taxon>Thermococcaceae</taxon>
        <taxon>Thermococcus</taxon>
    </lineage>
</organism>